<protein>
    <recommendedName>
        <fullName>Demethylspheroidene O-methyltransferase</fullName>
        <ecNumber>2.1.1.210</ecNumber>
    </recommendedName>
    <alternativeName>
        <fullName>Hydroxyneurosporene methyltransferase</fullName>
    </alternativeName>
</protein>
<evidence type="ECO:0000255" key="1">
    <source>
        <dbReference type="PROSITE-ProRule" id="PRU01020"/>
    </source>
</evidence>
<evidence type="ECO:0000256" key="2">
    <source>
        <dbReference type="SAM" id="MobiDB-lite"/>
    </source>
</evidence>
<evidence type="ECO:0000269" key="3">
    <source>
    </source>
</evidence>
<feature type="chain" id="PRO_0000410434" description="Demethylspheroidene O-methyltransferase">
    <location>
        <begin position="1"/>
        <end position="393"/>
    </location>
</feature>
<feature type="region of interest" description="Disordered" evidence="2">
    <location>
        <begin position="1"/>
        <end position="36"/>
    </location>
</feature>
<feature type="compositionally biased region" description="Low complexity" evidence="2">
    <location>
        <begin position="26"/>
        <end position="36"/>
    </location>
</feature>
<feature type="binding site" evidence="1">
    <location>
        <position position="259"/>
    </location>
    <ligand>
        <name>S-adenosyl-L-methionine</name>
        <dbReference type="ChEBI" id="CHEBI:59789"/>
    </ligand>
</feature>
<feature type="binding site" evidence="1">
    <location>
        <position position="297"/>
    </location>
    <ligand>
        <name>S-adenosyl-L-methionine</name>
        <dbReference type="ChEBI" id="CHEBI:59789"/>
    </ligand>
</feature>
<keyword id="KW-0125">Carotenoid biosynthesis</keyword>
<keyword id="KW-0149">Chlorophyll biosynthesis</keyword>
<keyword id="KW-0489">Methyltransferase</keyword>
<keyword id="KW-0602">Photosynthesis</keyword>
<keyword id="KW-1185">Reference proteome</keyword>
<keyword id="KW-0949">S-adenosyl-L-methionine</keyword>
<keyword id="KW-0808">Transferase</keyword>
<gene>
    <name type="primary">crtF</name>
    <name type="ordered locus">RCAP_rcc00685</name>
</gene>
<accession>D5AP78</accession>
<accession>P17061</accession>
<reference key="1">
    <citation type="journal article" date="1989" name="Mol. Gen. Genet.">
        <title>Nucleotide sequence, organization, and nature of the protein products of the carotenoid biosynthesis gene cluster of Rhodobacter capsulatus.</title>
        <authorList>
            <person name="Armstrong G.A."/>
            <person name="Alberti M."/>
            <person name="Leach F."/>
            <person name="Hearst J.E."/>
        </authorList>
    </citation>
    <scope>NUCLEOTIDE SEQUENCE [GENOMIC DNA]</scope>
    <source>
        <strain>ATCC BAA-309 / NBRC 16581 / SB1003</strain>
    </source>
</reference>
<reference key="2">
    <citation type="journal article" date="1993" name="J. Bacteriol.">
        <title>The Rhodobacter capsulatus chlorin reductase-encoding locus, bchA, consists of three genes, bchX, bchY, and bchZ.</title>
        <authorList>
            <person name="Burke D.H."/>
            <person name="Alberti M."/>
            <person name="Hearst J.E."/>
        </authorList>
    </citation>
    <scope>NUCLEOTIDE SEQUENCE [GENOMIC DNA]</scope>
    <source>
        <strain>ATCC BAA-309 / NBRC 16581 / SB1003</strain>
    </source>
</reference>
<reference key="3">
    <citation type="journal article" date="2010" name="J. Bacteriol.">
        <title>Complete genome sequence of the photosynthetic purple nonsulfur bacterium Rhodobacter capsulatus SB 1003.</title>
        <authorList>
            <person name="Strnad H."/>
            <person name="Lapidus A."/>
            <person name="Paces J."/>
            <person name="Ulbrich P."/>
            <person name="Vlcek C."/>
            <person name="Paces V."/>
            <person name="Haselkorn R."/>
        </authorList>
    </citation>
    <scope>NUCLEOTIDE SEQUENCE [LARGE SCALE GENOMIC DNA]</scope>
    <source>
        <strain>ATCC BAA-309 / NBRC 16581 / SB1003</strain>
    </source>
</reference>
<reference key="4">
    <citation type="journal article" date="2003" name="FEMS Microbiol. Lett.">
        <title>Expression and biochemical characterization of the 1-HO-carotenoid methylase CrtF from Rhodobacter capsulatus.</title>
        <authorList>
            <person name="Badenhop F."/>
            <person name="Steiger S."/>
            <person name="Sandmann M."/>
            <person name="Sandmann G."/>
        </authorList>
    </citation>
    <scope>FUNCTION</scope>
    <scope>CATALYTIC ACTIVITY</scope>
    <source>
        <strain>ATCC BAA-309 / NBRC 16581 / SB1003</strain>
    </source>
</reference>
<proteinExistence type="evidence at protein level"/>
<comment type="function">
    <text evidence="3">Methyltransferase that mediates the O-methylation of 1-hydroxy carotenoids. Converts hydroxyneurosporene to methoxyneurosporene or demethylspheroidene to spheroidene. Also able to produce spirilloxanthin.</text>
</comment>
<comment type="catalytic activity">
    <reaction evidence="3">
        <text>demethylspheroidene + S-adenosyl-L-methionine = spheroidene + S-adenosyl-L-homocysteine + H(+)</text>
        <dbReference type="Rhea" id="RHEA:30903"/>
        <dbReference type="ChEBI" id="CHEBI:15378"/>
        <dbReference type="ChEBI" id="CHEBI:35330"/>
        <dbReference type="ChEBI" id="CHEBI:57856"/>
        <dbReference type="ChEBI" id="CHEBI:59789"/>
        <dbReference type="ChEBI" id="CHEBI:62505"/>
        <dbReference type="EC" id="2.1.1.210"/>
    </reaction>
</comment>
<comment type="pathway">
    <text>Carotenoid biosynthesis; spheroidene biosynthesis.</text>
</comment>
<comment type="similarity">
    <text evidence="1">Belongs to the class I-like SAM-binding methyltransferase superfamily. Cation-independent O-methyltransferase family.</text>
</comment>
<dbReference type="EC" id="2.1.1.210"/>
<dbReference type="EMBL" id="X52291">
    <property type="protein sequence ID" value="CAA36539.1"/>
    <property type="molecule type" value="Genomic_DNA"/>
</dbReference>
<dbReference type="EMBL" id="Z11165">
    <property type="protein sequence ID" value="CAA77546.1"/>
    <property type="molecule type" value="Genomic_DNA"/>
</dbReference>
<dbReference type="EMBL" id="CP001312">
    <property type="protein sequence ID" value="ADE84450.1"/>
    <property type="molecule type" value="Genomic_DNA"/>
</dbReference>
<dbReference type="PIR" id="S04408">
    <property type="entry name" value="S04408"/>
</dbReference>
<dbReference type="RefSeq" id="WP_013066429.1">
    <property type="nucleotide sequence ID" value="NC_014034.1"/>
</dbReference>
<dbReference type="SMR" id="D5AP78"/>
<dbReference type="STRING" id="272942.RCAP_rcc00685"/>
<dbReference type="GeneID" id="31489631"/>
<dbReference type="KEGG" id="rcp:RCAP_rcc00685"/>
<dbReference type="eggNOG" id="COG0500">
    <property type="taxonomic scope" value="Bacteria"/>
</dbReference>
<dbReference type="HOGENOM" id="CLU_005533_12_0_5"/>
<dbReference type="OrthoDB" id="7418600at2"/>
<dbReference type="UniPathway" id="UPA00683"/>
<dbReference type="Proteomes" id="UP000002361">
    <property type="component" value="Chromosome"/>
</dbReference>
<dbReference type="GO" id="GO:0043803">
    <property type="term" value="F:hydroxyneurosporene-O-methyltransferase activity"/>
    <property type="evidence" value="ECO:0007669"/>
    <property type="project" value="UniProtKB-EC"/>
</dbReference>
<dbReference type="GO" id="GO:0008171">
    <property type="term" value="F:O-methyltransferase activity"/>
    <property type="evidence" value="ECO:0007669"/>
    <property type="project" value="InterPro"/>
</dbReference>
<dbReference type="GO" id="GO:0046983">
    <property type="term" value="F:protein dimerization activity"/>
    <property type="evidence" value="ECO:0007669"/>
    <property type="project" value="InterPro"/>
</dbReference>
<dbReference type="GO" id="GO:0016117">
    <property type="term" value="P:carotenoid biosynthetic process"/>
    <property type="evidence" value="ECO:0007669"/>
    <property type="project" value="UniProtKB-KW"/>
</dbReference>
<dbReference type="GO" id="GO:0015995">
    <property type="term" value="P:chlorophyll biosynthetic process"/>
    <property type="evidence" value="ECO:0007669"/>
    <property type="project" value="UniProtKB-KW"/>
</dbReference>
<dbReference type="GO" id="GO:0032259">
    <property type="term" value="P:methylation"/>
    <property type="evidence" value="ECO:0007669"/>
    <property type="project" value="UniProtKB-KW"/>
</dbReference>
<dbReference type="GO" id="GO:0015979">
    <property type="term" value="P:photosynthesis"/>
    <property type="evidence" value="ECO:0007669"/>
    <property type="project" value="UniProtKB-KW"/>
</dbReference>
<dbReference type="CDD" id="cd02440">
    <property type="entry name" value="AdoMet_MTases"/>
    <property type="match status" value="1"/>
</dbReference>
<dbReference type="Gene3D" id="3.40.50.150">
    <property type="entry name" value="Vaccinia Virus protein VP39"/>
    <property type="match status" value="1"/>
</dbReference>
<dbReference type="Gene3D" id="1.10.10.10">
    <property type="entry name" value="Winged helix-like DNA-binding domain superfamily/Winged helix DNA-binding domain"/>
    <property type="match status" value="1"/>
</dbReference>
<dbReference type="InterPro" id="IPR016461">
    <property type="entry name" value="COMT-like"/>
</dbReference>
<dbReference type="InterPro" id="IPR001077">
    <property type="entry name" value="O_MeTrfase_dom"/>
</dbReference>
<dbReference type="InterPro" id="IPR012967">
    <property type="entry name" value="Plant_O-MeTrfase_dimerisation"/>
</dbReference>
<dbReference type="InterPro" id="IPR029063">
    <property type="entry name" value="SAM-dependent_MTases_sf"/>
</dbReference>
<dbReference type="InterPro" id="IPR036388">
    <property type="entry name" value="WH-like_DNA-bd_sf"/>
</dbReference>
<dbReference type="InterPro" id="IPR036390">
    <property type="entry name" value="WH_DNA-bd_sf"/>
</dbReference>
<dbReference type="PANTHER" id="PTHR43712:SF2">
    <property type="entry name" value="O-METHYLTRANSFERASE CICE"/>
    <property type="match status" value="1"/>
</dbReference>
<dbReference type="PANTHER" id="PTHR43712">
    <property type="entry name" value="PUTATIVE (AFU_ORTHOLOGUE AFUA_4G14580)-RELATED"/>
    <property type="match status" value="1"/>
</dbReference>
<dbReference type="Pfam" id="PF08100">
    <property type="entry name" value="Dimerisation"/>
    <property type="match status" value="1"/>
</dbReference>
<dbReference type="Pfam" id="PF00891">
    <property type="entry name" value="Methyltransf_2"/>
    <property type="match status" value="1"/>
</dbReference>
<dbReference type="SUPFAM" id="SSF53335">
    <property type="entry name" value="S-adenosyl-L-methionine-dependent methyltransferases"/>
    <property type="match status" value="1"/>
</dbReference>
<dbReference type="SUPFAM" id="SSF46785">
    <property type="entry name" value="Winged helix' DNA-binding domain"/>
    <property type="match status" value="1"/>
</dbReference>
<dbReference type="PROSITE" id="PS51683">
    <property type="entry name" value="SAM_OMT_II"/>
    <property type="match status" value="1"/>
</dbReference>
<organism>
    <name type="scientific">Rhodobacter capsulatus (strain ATCC BAA-309 / NBRC 16581 / SB1003)</name>
    <dbReference type="NCBI Taxonomy" id="272942"/>
    <lineage>
        <taxon>Bacteria</taxon>
        <taxon>Pseudomonadati</taxon>
        <taxon>Pseudomonadota</taxon>
        <taxon>Alphaproteobacteria</taxon>
        <taxon>Rhodobacterales</taxon>
        <taxon>Rhodobacter group</taxon>
        <taxon>Rhodobacter</taxon>
    </lineage>
</organism>
<name>CRTF_RHOCB</name>
<sequence length="393" mass="43039">MPKDDHTGATADRTAQPTGTGKQPLVPGQPGAAPVQPGRVNFFTRIALSQRLHEIFERLPLMNRVTRREGEALFDIVSGFVQSQVLLAIVEFRVLHILAGASWPLPQLAERTGLAEDRLAVLMQAAAALKLVKFRRGLWQLAPRGAAFITVPGLEAMVRHHPVLYRDLADPVAFLKGDIEPELAGFWPYVFGPLAQEDAGLAERYSQLMADSQRVVADDTLRLVDLRDAKRVMDVGGGTGAFLRVVAKLYPELPLTLFDLPHVLSVADRFSPKLDFAPGSFRDDPIPQGADVITLVRVLYDHPDSVVEPLLAKVHAALPPGGRLIISEAMAGGAKPDRACDVYFAFYTMAMSSGRTRSPEEIKQMLEKAGFTKVSKPRTLRPFITSVIEAERG</sequence>